<sequence length="109" mass="13164">MEDRVEISLLMDFYGPLLTEKQSEIMQWYYNDDLSLAEIAELNQTSRQAIHDLIKRCYKQLLSYESKLNLLQKSINRKKEIMNFLEHLKNKYSIDDEDIIKYKEKLENL</sequence>
<evidence type="ECO:0000255" key="1">
    <source>
        <dbReference type="HAMAP-Rule" id="MF_00245"/>
    </source>
</evidence>
<reference key="1">
    <citation type="submission" date="2007-06" db="EMBL/GenBank/DDBJ databases">
        <title>Complete sequence of Clostridium beijerinckii NCIMB 8052.</title>
        <authorList>
            <consortium name="US DOE Joint Genome Institute"/>
            <person name="Copeland A."/>
            <person name="Lucas S."/>
            <person name="Lapidus A."/>
            <person name="Barry K."/>
            <person name="Detter J.C."/>
            <person name="Glavina del Rio T."/>
            <person name="Hammon N."/>
            <person name="Israni S."/>
            <person name="Dalin E."/>
            <person name="Tice H."/>
            <person name="Pitluck S."/>
            <person name="Sims D."/>
            <person name="Brettin T."/>
            <person name="Bruce D."/>
            <person name="Tapia R."/>
            <person name="Brainard J."/>
            <person name="Schmutz J."/>
            <person name="Larimer F."/>
            <person name="Land M."/>
            <person name="Hauser L."/>
            <person name="Kyrpides N."/>
            <person name="Mikhailova N."/>
            <person name="Bennet G."/>
            <person name="Cann I."/>
            <person name="Chen J.-S."/>
            <person name="Contreras A.L."/>
            <person name="Jones D."/>
            <person name="Kashket E."/>
            <person name="Mitchell W."/>
            <person name="Stoddard S."/>
            <person name="Schwarz W."/>
            <person name="Qureshi N."/>
            <person name="Young M."/>
            <person name="Shi Z."/>
            <person name="Ezeji T."/>
            <person name="White B."/>
            <person name="Blaschek H."/>
            <person name="Richardson P."/>
        </authorList>
    </citation>
    <scope>NUCLEOTIDE SEQUENCE [LARGE SCALE GENOMIC DNA]</scope>
    <source>
        <strain>ATCC 51743 / NCIMB 8052</strain>
    </source>
</reference>
<accession>A6LSM6</accession>
<feature type="chain" id="PRO_1000078399" description="UPF0122 protein Cbei_1174">
    <location>
        <begin position="1"/>
        <end position="109"/>
    </location>
</feature>
<gene>
    <name type="ordered locus">Cbei_1174</name>
</gene>
<comment type="function">
    <text evidence="1">Might take part in the signal recognition particle (SRP) pathway. This is inferred from the conservation of its genetic proximity to ftsY/ffh. May be a regulatory protein.</text>
</comment>
<comment type="similarity">
    <text evidence="1">Belongs to the UPF0122 family.</text>
</comment>
<proteinExistence type="inferred from homology"/>
<organism>
    <name type="scientific">Clostridium beijerinckii (strain ATCC 51743 / NCIMB 8052)</name>
    <name type="common">Clostridium acetobutylicum</name>
    <dbReference type="NCBI Taxonomy" id="290402"/>
    <lineage>
        <taxon>Bacteria</taxon>
        <taxon>Bacillati</taxon>
        <taxon>Bacillota</taxon>
        <taxon>Clostridia</taxon>
        <taxon>Eubacteriales</taxon>
        <taxon>Clostridiaceae</taxon>
        <taxon>Clostridium</taxon>
    </lineage>
</organism>
<protein>
    <recommendedName>
        <fullName evidence="1">UPF0122 protein Cbei_1174</fullName>
    </recommendedName>
</protein>
<name>Y1174_CLOB8</name>
<dbReference type="EMBL" id="CP000721">
    <property type="protein sequence ID" value="ABR33356.1"/>
    <property type="molecule type" value="Genomic_DNA"/>
</dbReference>
<dbReference type="RefSeq" id="WP_011968512.1">
    <property type="nucleotide sequence ID" value="NC_009617.1"/>
</dbReference>
<dbReference type="SMR" id="A6LSM6"/>
<dbReference type="KEGG" id="cbe:Cbei_1174"/>
<dbReference type="eggNOG" id="COG2739">
    <property type="taxonomic scope" value="Bacteria"/>
</dbReference>
<dbReference type="HOGENOM" id="CLU_129218_0_1_9"/>
<dbReference type="Proteomes" id="UP000000565">
    <property type="component" value="Chromosome"/>
</dbReference>
<dbReference type="Gene3D" id="1.10.10.10">
    <property type="entry name" value="Winged helix-like DNA-binding domain superfamily/Winged helix DNA-binding domain"/>
    <property type="match status" value="1"/>
</dbReference>
<dbReference type="HAMAP" id="MF_00245">
    <property type="entry name" value="UPF0122"/>
    <property type="match status" value="1"/>
</dbReference>
<dbReference type="InterPro" id="IPR013324">
    <property type="entry name" value="RNA_pol_sigma_r3/r4-like"/>
</dbReference>
<dbReference type="InterPro" id="IPR007394">
    <property type="entry name" value="UPF0122"/>
</dbReference>
<dbReference type="InterPro" id="IPR054831">
    <property type="entry name" value="UPF0122_fam_protein"/>
</dbReference>
<dbReference type="InterPro" id="IPR036388">
    <property type="entry name" value="WH-like_DNA-bd_sf"/>
</dbReference>
<dbReference type="NCBIfam" id="NF001072">
    <property type="entry name" value="PRK00118.2-2"/>
    <property type="match status" value="1"/>
</dbReference>
<dbReference type="NCBIfam" id="NF045758">
    <property type="entry name" value="YlxM"/>
    <property type="match status" value="1"/>
</dbReference>
<dbReference type="PANTHER" id="PTHR40083">
    <property type="entry name" value="UPF0122 PROTEIN CBO2450/CLC_2298"/>
    <property type="match status" value="1"/>
</dbReference>
<dbReference type="PANTHER" id="PTHR40083:SF1">
    <property type="entry name" value="UPF0122 PROTEIN YLXM"/>
    <property type="match status" value="1"/>
</dbReference>
<dbReference type="Pfam" id="PF04297">
    <property type="entry name" value="UPF0122"/>
    <property type="match status" value="1"/>
</dbReference>
<dbReference type="SUPFAM" id="SSF88659">
    <property type="entry name" value="Sigma3 and sigma4 domains of RNA polymerase sigma factors"/>
    <property type="match status" value="1"/>
</dbReference>